<feature type="chain" id="PRO_0000041084" description="Outer capsid protein VP4" evidence="1">
    <location>
        <begin position="1"/>
        <end position="772"/>
    </location>
</feature>
<feature type="chain" id="PRO_0000041085" description="Outer capsid protein VP8*" evidence="1">
    <location>
        <begin position="1"/>
        <end position="232"/>
    </location>
</feature>
<feature type="chain" id="PRO_0000041086" description="Outer capsid protein VP5*" evidence="1">
    <location>
        <begin position="246"/>
        <end position="772"/>
    </location>
</feature>
<feature type="region of interest" description="Spike head" evidence="1">
    <location>
        <begin position="65"/>
        <end position="225"/>
    </location>
</feature>
<feature type="region of interest" description="Spike body and stalk (antigen domain)" evidence="1">
    <location>
        <begin position="247"/>
        <end position="478"/>
    </location>
</feature>
<feature type="region of interest" description="Hydrophobic; possible role in virus entry into host cell" evidence="1">
    <location>
        <begin position="388"/>
        <end position="408"/>
    </location>
</feature>
<feature type="region of interest" description="Spike foot" evidence="1">
    <location>
        <begin position="509"/>
        <end position="772"/>
    </location>
</feature>
<feature type="coiled-coil region" evidence="1">
    <location>
        <begin position="483"/>
        <end position="510"/>
    </location>
</feature>
<feature type="short sequence motif" description="YGL motif; interaction with ITGA4" evidence="1">
    <location>
        <begin position="447"/>
        <end position="449"/>
    </location>
</feature>
<feature type="site" description="Cleavage" evidence="1">
    <location>
        <begin position="232"/>
        <end position="233"/>
    </location>
</feature>
<feature type="site" description="Cleavage" evidence="1">
    <location>
        <begin position="242"/>
        <end position="243"/>
    </location>
</feature>
<feature type="site" description="Probable cleavage" evidence="1">
    <location>
        <begin position="245"/>
        <end position="246"/>
    </location>
</feature>
<sequence length="772" mass="86883">MRSLIYRQLLYNSYSVDLSDEITNIGAEKKENVTVQIGEFAQSQYAPVSWGSGETLSGNVEEQPLDGPYTPDKSNLPSNYWYLINPSNDGVVFSVTDNSTLWMFTYLVLPNTAQTSVVVNVMNETVNISIDNSGSAYKFVDYFKTSSAQAYRSRNFLITAHRLQAYKRDGDGNISNYWGSDAYGDLRVGTYFNPVPNAVINLNADFYVIPDSQQEMCTEYIRRGLPAIQTTTYVTPISYAVRSQRIARPNEDITISKASLWKEVQYNRDIVIRFVFANNIIKAGGLGYKWSEISYKANNYQYTYMRDGIEVVAHTTVSVNGVSVYDYNTGSLPTDFTIRNYDVLKESSFVYVDYWDDSQAFRNMVYVRSLNAELNQVQCVGGHYSFALPVGSWPVMQGGSVVLTFDGVTLSTQFTDYVSLNSLRFRFRCAVSEPPFRVTGTRISNLYGLPAANPMGDQQYYEASGRFSLISLVPSNDDYQTPIANSVTVRQDLERQLDEMRREFNELSANIALSQLIDLALLPLDMFSMFSGIRSTIEAAKNFATSVMKKFRKSNLAKSVNSLTDAITDAAGSISRSSTLRSANSAVSVWTDISDIVDSTDNVVTATATAAAKKFRVKEFTTEFNGVSFDDISAAVVKTKMNKLNVVDEEMLPQIITEASEKFIPNRAYRLIDGDKVYEVTTEGKYFAYLTETFEEVMFDAERFAELVTYSPVISAIIDFKTIKNLNDNYGITREQALNMLRSDPKVLRSFINQNNPIIKNRIEQLILQCRI</sequence>
<comment type="function">
    <molecule>Outer capsid protein VP4</molecule>
    <text evidence="1">Spike-forming protein that mediates virion attachment to the host epithelial cell receptors and plays a major role in cell penetration, determination of host range restriction and virulence. Rotavirus attachment and entry into the host cell probably involves multiple sequential contacts between the outer capsid proteins VP4 and VP7, and the cell receptors. It is subsequently lost, together with VP7, following virus entry into the host cell. Following entry into the host cell, low intracellular or intravesicular Ca(2+) concentration probably causes the calcium-stabilized VP7 trimers to dissociate from the virion. This step is probably necessary for the membrane-disrupting entry step and the release of VP4, which is locked onto the virion by VP7. During the virus exit from the host cell, VP4 seems to be required to target the newly formed virions to the host cell lipid rafts.</text>
</comment>
<comment type="function">
    <molecule>Outer capsid protein VP5*</molecule>
    <text evidence="1">Forms the spike 'foot' and 'body' and acts as a membrane permeabilization protein that mediates release of viral particles from endosomal compartments into the cytoplasm. During entry, the part of VP5* that protrudes from the virus folds back on itself and reorganizes from a local dimer to a trimer. This reorganization may be linked to membrane penetration by exposing VP5* hydrophobic region. In integrin-dependent strains, VP5* targets the integrin heterodimer ITGA2/ITGB1 for cell attachment.</text>
</comment>
<comment type="function">
    <molecule>Outer capsid protein VP8*</molecule>
    <text evidence="1">Forms the head of the spikes and mediates the recognition of specific host cell surface glycans. It is the viral hemagglutinin and an important target of neutralizing antibodies. In sialic acid-dependent strains, VP8* binds to host cell sialic acid, most probably a ganglioside, providing the initial contact. In some other strains, VP8* mediates the attachment to histo-blood group antigens (HBGAs) for viral entry.</text>
</comment>
<comment type="subunit">
    <molecule>Outer capsid protein VP4</molecule>
    <text evidence="1">Homotrimer. VP4 adopts a dimeric appearance above the capsid surface, while forming a trimeric base anchored inside the capsid layer. Only hints of the third molecule are observed above the capsid surface. It probably performs a series of molecular rearrangements during viral entry. Prior to trypsin cleavage, it is flexible. The priming trypsin cleavage triggers its rearrangement into rigid spikes with approximate two-fold symmetry of their protruding parts. After an unknown second triggering event, cleaved VP4 may undergo another rearrangement, in which two VP5* subunits fold back on themselves and join a third subunit to form a tightly associated trimer, shaped like a folded umbrella. Interacts with VP6. Interacts with VP7.</text>
</comment>
<comment type="subunit">
    <molecule>Outer capsid protein VP5*</molecule>
    <text evidence="1">Homotrimer. The trimer is coiled-coil stabilized by its C-terminus, however, its N-terminus, known as antigen domain or 'body', seems to be flexible allowing it to self-associate either as a dimer or a trimer.</text>
</comment>
<comment type="subcellular location">
    <molecule>Outer capsid protein VP4</molecule>
    <subcellularLocation>
        <location evidence="1">Virion</location>
    </subcellularLocation>
    <subcellularLocation>
        <location evidence="1">Host rough endoplasmic reticulum</location>
    </subcellularLocation>
    <subcellularLocation>
        <location evidence="1">Host cell membrane</location>
    </subcellularLocation>
    <subcellularLocation>
        <location evidence="1">Host cytoplasm</location>
        <location evidence="1">Host cytoskeleton</location>
    </subcellularLocation>
    <subcellularLocation>
        <location evidence="1">Host endoplasmic reticulum-Golgi intermediate compartment</location>
    </subcellularLocation>
    <text evidence="1">The outer layer contains 180 copies of VP4, grouped as 60 dimers. Immature double-layered particles assembled in the cytoplasm bud across the membrane of the endoplasmic reticulum, acquiring during this process a transient lipid membrane that is modified with the ER resident viral glycoproteins NSP4 and VP7; these enveloped particles also contain VP4. As the particles move towards the interior of the ER cisternae, the transient lipid membrane and the non-structural protein NSP4 are lost, while the virus surface proteins VP4 and VP7 rearrange to form the outermost virus protein layer, yielding mature infectious triple-layered particles. VP4 also seems to associate with lipid rafts of the host cell membrane probably for the exit of the virus from the infected cell by an alternate pathway.</text>
</comment>
<comment type="subcellular location">
    <molecule>Outer capsid protein VP8*</molecule>
    <subcellularLocation>
        <location evidence="1">Virion</location>
    </subcellularLocation>
    <text evidence="1">Outer capsid protein.</text>
</comment>
<comment type="subcellular location">
    <molecule>Outer capsid protein VP5*</molecule>
    <subcellularLocation>
        <location evidence="1">Virion</location>
    </subcellularLocation>
    <text evidence="1">Outer capsid protein.</text>
</comment>
<comment type="domain">
    <molecule>Outer capsid protein VP4</molecule>
    <text evidence="1">The VP4 spike is divided into a foot, a stalk and body, and a head.</text>
</comment>
<comment type="PTM">
    <molecule>Outer capsid protein VP4</molecule>
    <text evidence="1">Proteolytic cleavage by trypsin results in activation of VP4 functions and greatly increases infectivity. The penetration into the host cell is dependent on trypsin treatment of VP4. It produces two peptides, VP5* and VP8* that remain associated with the virion. Cleavage of VP4 by trypsin probably occurs in vivo in the lumen of the intestine prior to infection of enterocytes. Trypsin seems to be incorporated into the three-layered viral particles but remains inactive as long as the viral outer capsid is intact and would only be activated upon the solubilization of the latter.</text>
</comment>
<comment type="miscellaneous">
    <text evidence="1">In group A rotaviruses, VP4 defines the P serotype.</text>
</comment>
<comment type="miscellaneous">
    <text evidence="1">Some rotavirus strains are neuraminidase-sensitive and require sialic acid to attach to the cell surface. Some rotavirus strains are integrin-dependent. Some rotavirus strains depend on ganglioside for their entry into the host cell. Hsp70 also seems to be involved in the entry of some strains.</text>
</comment>
<comment type="similarity">
    <text evidence="1">Belongs to the rotavirus VP4 family.</text>
</comment>
<reference key="1">
    <citation type="journal article" date="1993" name="Virology">
        <title>Similarity of the VP4 protein of human rotavirus strain 116E to that of the bovine B223 strain.</title>
        <authorList>
            <person name="Gentsch J.R."/>
            <person name="Das B.K."/>
            <person name="Jiang B."/>
            <person name="Bhan M.K."/>
            <person name="Glass R.I."/>
        </authorList>
    </citation>
    <scope>NUCLEOTIDE SEQUENCE [MRNA]</scope>
</reference>
<protein>
    <recommendedName>
        <fullName evidence="1">Outer capsid protein VP4</fullName>
    </recommendedName>
    <alternativeName>
        <fullName evidence="1">Hemagglutinin</fullName>
    </alternativeName>
    <component>
        <recommendedName>
            <fullName evidence="1">Outer capsid protein VP8*</fullName>
        </recommendedName>
    </component>
    <component>
        <recommendedName>
            <fullName evidence="1">Outer capsid protein VP5*</fullName>
        </recommendedName>
    </component>
</protein>
<accession>Q09113</accession>
<organismHost>
    <name type="scientific">Homo sapiens</name>
    <name type="common">Human</name>
    <dbReference type="NCBI Taxonomy" id="9606"/>
</organismHost>
<dbReference type="EMBL" id="L07934">
    <property type="protein sequence ID" value="AAA47357.1"/>
    <property type="molecule type" value="mRNA"/>
</dbReference>
<dbReference type="PIR" id="A46110">
    <property type="entry name" value="A46110"/>
</dbReference>
<dbReference type="SMR" id="Q09113"/>
<dbReference type="GO" id="GO:0044172">
    <property type="term" value="C:host cell endoplasmic reticulum-Golgi intermediate compartment"/>
    <property type="evidence" value="ECO:0007669"/>
    <property type="project" value="UniProtKB-SubCell"/>
</dbReference>
<dbReference type="GO" id="GO:0020002">
    <property type="term" value="C:host cell plasma membrane"/>
    <property type="evidence" value="ECO:0007669"/>
    <property type="project" value="UniProtKB-SubCell"/>
</dbReference>
<dbReference type="GO" id="GO:0044168">
    <property type="term" value="C:host cell rough endoplasmic reticulum"/>
    <property type="evidence" value="ECO:0007669"/>
    <property type="project" value="UniProtKB-SubCell"/>
</dbReference>
<dbReference type="GO" id="GO:0044163">
    <property type="term" value="C:host cytoskeleton"/>
    <property type="evidence" value="ECO:0007669"/>
    <property type="project" value="UniProtKB-SubCell"/>
</dbReference>
<dbReference type="GO" id="GO:0016020">
    <property type="term" value="C:membrane"/>
    <property type="evidence" value="ECO:0007669"/>
    <property type="project" value="UniProtKB-KW"/>
</dbReference>
<dbReference type="GO" id="GO:0039624">
    <property type="term" value="C:viral outer capsid"/>
    <property type="evidence" value="ECO:0007669"/>
    <property type="project" value="UniProtKB-UniRule"/>
</dbReference>
<dbReference type="GO" id="GO:0039665">
    <property type="term" value="P:permeabilization of host organelle membrane involved in viral entry into host cell"/>
    <property type="evidence" value="ECO:0007669"/>
    <property type="project" value="UniProtKB-UniRule"/>
</dbReference>
<dbReference type="GO" id="GO:0019062">
    <property type="term" value="P:virion attachment to host cell"/>
    <property type="evidence" value="ECO:0007669"/>
    <property type="project" value="UniProtKB-UniRule"/>
</dbReference>
<dbReference type="Gene3D" id="1.20.5.170">
    <property type="match status" value="1"/>
</dbReference>
<dbReference type="Gene3D" id="2.60.120.200">
    <property type="match status" value="1"/>
</dbReference>
<dbReference type="HAMAP" id="MF_04132">
    <property type="entry name" value="Rota_A_VP4"/>
    <property type="match status" value="1"/>
</dbReference>
<dbReference type="HAMAP" id="MF_04125">
    <property type="entry name" value="Rota_VP4"/>
    <property type="match status" value="1"/>
</dbReference>
<dbReference type="InterPro" id="IPR013320">
    <property type="entry name" value="ConA-like_dom_sf"/>
</dbReference>
<dbReference type="InterPro" id="IPR042546">
    <property type="entry name" value="Rota_A_VP4"/>
</dbReference>
<dbReference type="InterPro" id="IPR035330">
    <property type="entry name" value="Rota_VP4_MID"/>
</dbReference>
<dbReference type="InterPro" id="IPR038017">
    <property type="entry name" value="Rota_VP4_MID_sf"/>
</dbReference>
<dbReference type="InterPro" id="IPR000416">
    <property type="entry name" value="VP4_concanavalin-like"/>
</dbReference>
<dbReference type="InterPro" id="IPR035329">
    <property type="entry name" value="VP4_helical"/>
</dbReference>
<dbReference type="Pfam" id="PF17477">
    <property type="entry name" value="Rota_VP4_MID"/>
    <property type="match status" value="1"/>
</dbReference>
<dbReference type="Pfam" id="PF00426">
    <property type="entry name" value="VP4_haemagglut"/>
    <property type="match status" value="1"/>
</dbReference>
<dbReference type="Pfam" id="PF17478">
    <property type="entry name" value="VP4_helical"/>
    <property type="match status" value="1"/>
</dbReference>
<dbReference type="SUPFAM" id="SSF49899">
    <property type="entry name" value="Concanavalin A-like lectins/glucanases"/>
    <property type="match status" value="1"/>
</dbReference>
<dbReference type="SUPFAM" id="SSF111379">
    <property type="entry name" value="VP4 membrane interaction domain"/>
    <property type="match status" value="1"/>
</dbReference>
<organism>
    <name type="scientific">Rotavirus A (isolate RVA/Human/India/116E/1986/G9P8[11])</name>
    <name type="common">RV-A</name>
    <dbReference type="NCBI Taxonomy" id="638299"/>
    <lineage>
        <taxon>Viruses</taxon>
        <taxon>Riboviria</taxon>
        <taxon>Orthornavirae</taxon>
        <taxon>Duplornaviricota</taxon>
        <taxon>Resentoviricetes</taxon>
        <taxon>Reovirales</taxon>
        <taxon>Sedoreoviridae</taxon>
        <taxon>Rotavirus</taxon>
        <taxon>Rotavirus A</taxon>
    </lineage>
</organism>
<proteinExistence type="evidence at transcript level"/>
<name>VP4_ROTHU</name>
<keyword id="KW-0167">Capsid protein</keyword>
<keyword id="KW-0175">Coiled coil</keyword>
<keyword id="KW-0348">Hemagglutinin</keyword>
<keyword id="KW-1032">Host cell membrane</keyword>
<keyword id="KW-1035">Host cytoplasm</keyword>
<keyword id="KW-1037">Host cytoskeleton</keyword>
<keyword id="KW-1038">Host endoplasmic reticulum</keyword>
<keyword id="KW-1043">Host membrane</keyword>
<keyword id="KW-0945">Host-virus interaction</keyword>
<keyword id="KW-0472">Membrane</keyword>
<keyword id="KW-1152">Outer capsid protein</keyword>
<keyword id="KW-1161">Viral attachment to host cell</keyword>
<keyword id="KW-1162">Viral penetration into host cytoplasm</keyword>
<keyword id="KW-1173">Viral penetration via permeabilization of host membrane</keyword>
<keyword id="KW-0946">Virion</keyword>
<keyword id="KW-1160">Virus entry into host cell</keyword>
<evidence type="ECO:0000255" key="1">
    <source>
        <dbReference type="HAMAP-Rule" id="MF_04132"/>
    </source>
</evidence>